<protein>
    <recommendedName>
        <fullName evidence="1">Putative regulatory protein DehaBAV1_0033</fullName>
    </recommendedName>
</protein>
<accession>A5FP31</accession>
<comment type="similarity">
    <text evidence="1">Belongs to the RemA family.</text>
</comment>
<reference key="1">
    <citation type="submission" date="2007-05" db="EMBL/GenBank/DDBJ databases">
        <title>Complete sequence of Dehalococcoides sp. BAV1.</title>
        <authorList>
            <consortium name="US DOE Joint Genome Institute"/>
            <person name="Copeland A."/>
            <person name="Lucas S."/>
            <person name="Lapidus A."/>
            <person name="Barry K."/>
            <person name="Detter J.C."/>
            <person name="Glavina del Rio T."/>
            <person name="Hammon N."/>
            <person name="Israni S."/>
            <person name="Pitluck S."/>
            <person name="Lowry S."/>
            <person name="Clum A."/>
            <person name="Schmutz J."/>
            <person name="Larimer F."/>
            <person name="Land M."/>
            <person name="Hauser L."/>
            <person name="Kyrpides N."/>
            <person name="Kim E."/>
            <person name="Ritalahti K.M."/>
            <person name="Loeffler F."/>
            <person name="Richardson P."/>
        </authorList>
    </citation>
    <scope>NUCLEOTIDE SEQUENCE [LARGE SCALE GENOMIC DNA]</scope>
    <source>
        <strain>ATCC BAA-2100 / JCM 16839 / KCTC 5957 / BAV1</strain>
    </source>
</reference>
<sequence>MFIELVHIGFGNILAMNRVIAISPPSSAPIKRIIQESRTKGFLIDMTNGRKTKAVIFTDSGHIVLAALAPETITGRLSISRGGAVKPELVDDKLEL</sequence>
<gene>
    <name type="ordered locus">DehaBAV1_0033</name>
</gene>
<feature type="chain" id="PRO_1000087512" description="Putative regulatory protein DehaBAV1_0033">
    <location>
        <begin position="1"/>
        <end position="96"/>
    </location>
</feature>
<proteinExistence type="inferred from homology"/>
<organism>
    <name type="scientific">Dehalococcoides mccartyi (strain ATCC BAA-2100 / JCM 16839 / KCTC 5957 / BAV1)</name>
    <dbReference type="NCBI Taxonomy" id="216389"/>
    <lineage>
        <taxon>Bacteria</taxon>
        <taxon>Bacillati</taxon>
        <taxon>Chloroflexota</taxon>
        <taxon>Dehalococcoidia</taxon>
        <taxon>Dehalococcoidales</taxon>
        <taxon>Dehalococcoidaceae</taxon>
        <taxon>Dehalococcoides</taxon>
    </lineage>
</organism>
<name>Y033_DEHMB</name>
<evidence type="ECO:0000255" key="1">
    <source>
        <dbReference type="HAMAP-Rule" id="MF_01503"/>
    </source>
</evidence>
<dbReference type="EMBL" id="CP000688">
    <property type="protein sequence ID" value="ABQ16625.1"/>
    <property type="molecule type" value="Genomic_DNA"/>
</dbReference>
<dbReference type="SMR" id="A5FP31"/>
<dbReference type="KEGG" id="deb:DehaBAV1_0033"/>
<dbReference type="PATRIC" id="fig|216389.18.peg.35"/>
<dbReference type="HOGENOM" id="CLU_165326_0_0_0"/>
<dbReference type="HAMAP" id="MF_01503">
    <property type="entry name" value="RemA"/>
    <property type="match status" value="1"/>
</dbReference>
<dbReference type="InterPro" id="IPR007169">
    <property type="entry name" value="RemA-like"/>
</dbReference>
<dbReference type="NCBIfam" id="NF003315">
    <property type="entry name" value="PRK04323.1"/>
    <property type="match status" value="1"/>
</dbReference>
<dbReference type="PANTHER" id="PTHR38449:SF1">
    <property type="entry name" value="REGULATORY PROTEIN SSL2874-RELATED"/>
    <property type="match status" value="1"/>
</dbReference>
<dbReference type="PANTHER" id="PTHR38449">
    <property type="entry name" value="REGULATORY PROTEIN TM_1690-RELATED"/>
    <property type="match status" value="1"/>
</dbReference>
<dbReference type="Pfam" id="PF04025">
    <property type="entry name" value="RemA-like"/>
    <property type="match status" value="1"/>
</dbReference>